<evidence type="ECO:0000250" key="1">
    <source>
        <dbReference type="UniProtKB" id="Q94K49"/>
    </source>
</evidence>
<evidence type="ECO:0000250" key="2">
    <source>
        <dbReference type="UniProtKB" id="Q96MB7"/>
    </source>
</evidence>
<evidence type="ECO:0000255" key="3"/>
<evidence type="ECO:0000255" key="4">
    <source>
        <dbReference type="PROSITE-ProRule" id="PRU00768"/>
    </source>
</evidence>
<evidence type="ECO:0000305" key="5"/>
<evidence type="ECO:0000312" key="6">
    <source>
        <dbReference type="Araport" id="AT3G55350"/>
    </source>
</evidence>
<evidence type="ECO:0000312" key="7">
    <source>
        <dbReference type="EMBL" id="CAB75893.1"/>
    </source>
</evidence>
<dbReference type="EC" id="3.1.-.-"/>
<dbReference type="EMBL" id="AL132975">
    <property type="protein sequence ID" value="CAB75893.1"/>
    <property type="molecule type" value="Genomic_DNA"/>
</dbReference>
<dbReference type="EMBL" id="CP002686">
    <property type="protein sequence ID" value="AEE79371.1"/>
    <property type="molecule type" value="Genomic_DNA"/>
</dbReference>
<dbReference type="EMBL" id="AK117365">
    <property type="protein sequence ID" value="BAC42035.1"/>
    <property type="molecule type" value="mRNA"/>
</dbReference>
<dbReference type="EMBL" id="BT009674">
    <property type="protein sequence ID" value="AAP80175.1"/>
    <property type="molecule type" value="mRNA"/>
</dbReference>
<dbReference type="EMBL" id="AY087712">
    <property type="protein sequence ID" value="AAM65249.1"/>
    <property type="molecule type" value="mRNA"/>
</dbReference>
<dbReference type="PIR" id="T47674">
    <property type="entry name" value="T47674"/>
</dbReference>
<dbReference type="RefSeq" id="NP_191095.1">
    <property type="nucleotide sequence ID" value="NM_115393.3"/>
</dbReference>
<dbReference type="SMR" id="Q9M2U3"/>
<dbReference type="FunCoup" id="Q9M2U3">
    <property type="interactions" value="671"/>
</dbReference>
<dbReference type="STRING" id="3702.Q9M2U3"/>
<dbReference type="PaxDb" id="3702-AT3G55350.1"/>
<dbReference type="ProteomicsDB" id="245026"/>
<dbReference type="DNASU" id="824701"/>
<dbReference type="EnsemblPlants" id="AT3G55350.1">
    <property type="protein sequence ID" value="AT3G55350.1"/>
    <property type="gene ID" value="AT3G55350"/>
</dbReference>
<dbReference type="GeneID" id="824701"/>
<dbReference type="Gramene" id="AT3G55350.1">
    <property type="protein sequence ID" value="AT3G55350.1"/>
    <property type="gene ID" value="AT3G55350"/>
</dbReference>
<dbReference type="KEGG" id="ath:AT3G55350"/>
<dbReference type="Araport" id="AT3G55350"/>
<dbReference type="TAIR" id="AT3G55350"/>
<dbReference type="eggNOG" id="KOG4585">
    <property type="taxonomic scope" value="Eukaryota"/>
</dbReference>
<dbReference type="HOGENOM" id="CLU_018552_3_4_1"/>
<dbReference type="InParanoid" id="Q9M2U3"/>
<dbReference type="OMA" id="GVMWKPD"/>
<dbReference type="OrthoDB" id="2668416at2759"/>
<dbReference type="PhylomeDB" id="Q9M2U3"/>
<dbReference type="PRO" id="PR:Q9M2U3"/>
<dbReference type="Proteomes" id="UP000006548">
    <property type="component" value="Chromosome 3"/>
</dbReference>
<dbReference type="ExpressionAtlas" id="Q9M2U3">
    <property type="expression patterns" value="baseline and differential"/>
</dbReference>
<dbReference type="GO" id="GO:0000118">
    <property type="term" value="C:histone deacetylase complex"/>
    <property type="evidence" value="ECO:0000314"/>
    <property type="project" value="TAIR"/>
</dbReference>
<dbReference type="GO" id="GO:0046872">
    <property type="term" value="F:metal ion binding"/>
    <property type="evidence" value="ECO:0007669"/>
    <property type="project" value="UniProtKB-KW"/>
</dbReference>
<dbReference type="GO" id="GO:0004518">
    <property type="term" value="F:nuclease activity"/>
    <property type="evidence" value="ECO:0007669"/>
    <property type="project" value="UniProtKB-KW"/>
</dbReference>
<dbReference type="InterPro" id="IPR045249">
    <property type="entry name" value="HARBI1-like"/>
</dbReference>
<dbReference type="InterPro" id="IPR027806">
    <property type="entry name" value="HARBI1_dom"/>
</dbReference>
<dbReference type="PANTHER" id="PTHR22930">
    <property type="match status" value="1"/>
</dbReference>
<dbReference type="PANTHER" id="PTHR22930:SF205">
    <property type="entry name" value="PROTEIN ALP1-LIKE"/>
    <property type="match status" value="1"/>
</dbReference>
<dbReference type="Pfam" id="PF13359">
    <property type="entry name" value="DDE_Tnp_4"/>
    <property type="match status" value="1"/>
</dbReference>
<protein>
    <recommendedName>
        <fullName evidence="5">Protein ALP1-like</fullName>
        <ecNumber>3.1.-.-</ecNumber>
    </recommendedName>
</protein>
<comment type="function">
    <text evidence="5">Transposase-derived protein that may have nuclease activity.</text>
</comment>
<comment type="cofactor">
    <cofactor evidence="2">
        <name>a divalent metal cation</name>
        <dbReference type="ChEBI" id="CHEBI:60240"/>
    </cofactor>
</comment>
<comment type="subcellular location">
    <subcellularLocation>
        <location evidence="1 4">Nucleus</location>
    </subcellularLocation>
</comment>
<comment type="similarity">
    <text evidence="5">Belongs to the HARBI1 family.</text>
</comment>
<reference key="1">
    <citation type="journal article" date="2000" name="Nature">
        <title>Sequence and analysis of chromosome 3 of the plant Arabidopsis thaliana.</title>
        <authorList>
            <person name="Salanoubat M."/>
            <person name="Lemcke K."/>
            <person name="Rieger M."/>
            <person name="Ansorge W."/>
            <person name="Unseld M."/>
            <person name="Fartmann B."/>
            <person name="Valle G."/>
            <person name="Bloecker H."/>
            <person name="Perez-Alonso M."/>
            <person name="Obermaier B."/>
            <person name="Delseny M."/>
            <person name="Boutry M."/>
            <person name="Grivell L.A."/>
            <person name="Mache R."/>
            <person name="Puigdomenech P."/>
            <person name="De Simone V."/>
            <person name="Choisne N."/>
            <person name="Artiguenave F."/>
            <person name="Robert C."/>
            <person name="Brottier P."/>
            <person name="Wincker P."/>
            <person name="Cattolico L."/>
            <person name="Weissenbach J."/>
            <person name="Saurin W."/>
            <person name="Quetier F."/>
            <person name="Schaefer M."/>
            <person name="Mueller-Auer S."/>
            <person name="Gabel C."/>
            <person name="Fuchs M."/>
            <person name="Benes V."/>
            <person name="Wurmbach E."/>
            <person name="Drzonek H."/>
            <person name="Erfle H."/>
            <person name="Jordan N."/>
            <person name="Bangert S."/>
            <person name="Wiedelmann R."/>
            <person name="Kranz H."/>
            <person name="Voss H."/>
            <person name="Holland R."/>
            <person name="Brandt P."/>
            <person name="Nyakatura G."/>
            <person name="Vezzi A."/>
            <person name="D'Angelo M."/>
            <person name="Pallavicini A."/>
            <person name="Toppo S."/>
            <person name="Simionati B."/>
            <person name="Conrad A."/>
            <person name="Hornischer K."/>
            <person name="Kauer G."/>
            <person name="Loehnert T.-H."/>
            <person name="Nordsiek G."/>
            <person name="Reichelt J."/>
            <person name="Scharfe M."/>
            <person name="Schoen O."/>
            <person name="Bargues M."/>
            <person name="Terol J."/>
            <person name="Climent J."/>
            <person name="Navarro P."/>
            <person name="Collado C."/>
            <person name="Perez-Perez A."/>
            <person name="Ottenwaelder B."/>
            <person name="Duchemin D."/>
            <person name="Cooke R."/>
            <person name="Laudie M."/>
            <person name="Berger-Llauro C."/>
            <person name="Purnelle B."/>
            <person name="Masuy D."/>
            <person name="de Haan M."/>
            <person name="Maarse A.C."/>
            <person name="Alcaraz J.-P."/>
            <person name="Cottet A."/>
            <person name="Casacuberta E."/>
            <person name="Monfort A."/>
            <person name="Argiriou A."/>
            <person name="Flores M."/>
            <person name="Liguori R."/>
            <person name="Vitale D."/>
            <person name="Mannhaupt G."/>
            <person name="Haase D."/>
            <person name="Schoof H."/>
            <person name="Rudd S."/>
            <person name="Zaccaria P."/>
            <person name="Mewes H.-W."/>
            <person name="Mayer K.F.X."/>
            <person name="Kaul S."/>
            <person name="Town C.D."/>
            <person name="Koo H.L."/>
            <person name="Tallon L.J."/>
            <person name="Jenkins J."/>
            <person name="Rooney T."/>
            <person name="Rizzo M."/>
            <person name="Walts A."/>
            <person name="Utterback T."/>
            <person name="Fujii C.Y."/>
            <person name="Shea T.P."/>
            <person name="Creasy T.H."/>
            <person name="Haas B."/>
            <person name="Maiti R."/>
            <person name="Wu D."/>
            <person name="Peterson J."/>
            <person name="Van Aken S."/>
            <person name="Pai G."/>
            <person name="Militscher J."/>
            <person name="Sellers P."/>
            <person name="Gill J.E."/>
            <person name="Feldblyum T.V."/>
            <person name="Preuss D."/>
            <person name="Lin X."/>
            <person name="Nierman W.C."/>
            <person name="Salzberg S.L."/>
            <person name="White O."/>
            <person name="Venter J.C."/>
            <person name="Fraser C.M."/>
            <person name="Kaneko T."/>
            <person name="Nakamura Y."/>
            <person name="Sato S."/>
            <person name="Kato T."/>
            <person name="Asamizu E."/>
            <person name="Sasamoto S."/>
            <person name="Kimura T."/>
            <person name="Idesawa K."/>
            <person name="Kawashima K."/>
            <person name="Kishida Y."/>
            <person name="Kiyokawa C."/>
            <person name="Kohara M."/>
            <person name="Matsumoto M."/>
            <person name="Matsuno A."/>
            <person name="Muraki A."/>
            <person name="Nakayama S."/>
            <person name="Nakazaki N."/>
            <person name="Shinpo S."/>
            <person name="Takeuchi C."/>
            <person name="Wada T."/>
            <person name="Watanabe A."/>
            <person name="Yamada M."/>
            <person name="Yasuda M."/>
            <person name="Tabata S."/>
        </authorList>
    </citation>
    <scope>NUCLEOTIDE SEQUENCE [LARGE SCALE GENOMIC DNA]</scope>
    <source>
        <strain>cv. Columbia</strain>
    </source>
</reference>
<reference key="2">
    <citation type="journal article" date="2017" name="Plant J.">
        <title>Araport11: a complete reannotation of the Arabidopsis thaliana reference genome.</title>
        <authorList>
            <person name="Cheng C.Y."/>
            <person name="Krishnakumar V."/>
            <person name="Chan A.P."/>
            <person name="Thibaud-Nissen F."/>
            <person name="Schobel S."/>
            <person name="Town C.D."/>
        </authorList>
    </citation>
    <scope>GENOME REANNOTATION</scope>
    <source>
        <strain>cv. Columbia</strain>
    </source>
</reference>
<reference key="3">
    <citation type="journal article" date="2002" name="Science">
        <title>Functional annotation of a full-length Arabidopsis cDNA collection.</title>
        <authorList>
            <person name="Seki M."/>
            <person name="Narusaka M."/>
            <person name="Kamiya A."/>
            <person name="Ishida J."/>
            <person name="Satou M."/>
            <person name="Sakurai T."/>
            <person name="Nakajima M."/>
            <person name="Enju A."/>
            <person name="Akiyama K."/>
            <person name="Oono Y."/>
            <person name="Muramatsu M."/>
            <person name="Hayashizaki Y."/>
            <person name="Kawai J."/>
            <person name="Carninci P."/>
            <person name="Itoh M."/>
            <person name="Ishii Y."/>
            <person name="Arakawa T."/>
            <person name="Shibata K."/>
            <person name="Shinagawa A."/>
            <person name="Shinozaki K."/>
        </authorList>
    </citation>
    <scope>NUCLEOTIDE SEQUENCE [LARGE SCALE MRNA]</scope>
    <source>
        <strain>cv. Columbia</strain>
    </source>
</reference>
<reference key="4">
    <citation type="journal article" date="2003" name="Science">
        <title>Empirical analysis of transcriptional activity in the Arabidopsis genome.</title>
        <authorList>
            <person name="Yamada K."/>
            <person name="Lim J."/>
            <person name="Dale J.M."/>
            <person name="Chen H."/>
            <person name="Shinn P."/>
            <person name="Palm C.J."/>
            <person name="Southwick A.M."/>
            <person name="Wu H.C."/>
            <person name="Kim C.J."/>
            <person name="Nguyen M."/>
            <person name="Pham P.K."/>
            <person name="Cheuk R.F."/>
            <person name="Karlin-Newmann G."/>
            <person name="Liu S.X."/>
            <person name="Lam B."/>
            <person name="Sakano H."/>
            <person name="Wu T."/>
            <person name="Yu G."/>
            <person name="Miranda M."/>
            <person name="Quach H.L."/>
            <person name="Tripp M."/>
            <person name="Chang C.H."/>
            <person name="Lee J.M."/>
            <person name="Toriumi M.J."/>
            <person name="Chan M.M."/>
            <person name="Tang C.C."/>
            <person name="Onodera C.S."/>
            <person name="Deng J.M."/>
            <person name="Akiyama K."/>
            <person name="Ansari Y."/>
            <person name="Arakawa T."/>
            <person name="Banh J."/>
            <person name="Banno F."/>
            <person name="Bowser L."/>
            <person name="Brooks S.Y."/>
            <person name="Carninci P."/>
            <person name="Chao Q."/>
            <person name="Choy N."/>
            <person name="Enju A."/>
            <person name="Goldsmith A.D."/>
            <person name="Gurjal M."/>
            <person name="Hansen N.F."/>
            <person name="Hayashizaki Y."/>
            <person name="Johnson-Hopson C."/>
            <person name="Hsuan V.W."/>
            <person name="Iida K."/>
            <person name="Karnes M."/>
            <person name="Khan S."/>
            <person name="Koesema E."/>
            <person name="Ishida J."/>
            <person name="Jiang P.X."/>
            <person name="Jones T."/>
            <person name="Kawai J."/>
            <person name="Kamiya A."/>
            <person name="Meyers C."/>
            <person name="Nakajima M."/>
            <person name="Narusaka M."/>
            <person name="Seki M."/>
            <person name="Sakurai T."/>
            <person name="Satou M."/>
            <person name="Tamse R."/>
            <person name="Vaysberg M."/>
            <person name="Wallender E.K."/>
            <person name="Wong C."/>
            <person name="Yamamura Y."/>
            <person name="Yuan S."/>
            <person name="Shinozaki K."/>
            <person name="Davis R.W."/>
            <person name="Theologis A."/>
            <person name="Ecker J.R."/>
        </authorList>
    </citation>
    <scope>NUCLEOTIDE SEQUENCE [LARGE SCALE MRNA]</scope>
    <source>
        <strain>cv. Columbia</strain>
    </source>
</reference>
<reference key="5">
    <citation type="submission" date="2002-03" db="EMBL/GenBank/DDBJ databases">
        <title>Full-length cDNA from Arabidopsis thaliana.</title>
        <authorList>
            <person name="Brover V.V."/>
            <person name="Troukhan M.E."/>
            <person name="Alexandrov N.A."/>
            <person name="Lu Y.-P."/>
            <person name="Flavell R.B."/>
            <person name="Feldmann K.A."/>
        </authorList>
    </citation>
    <scope>NUCLEOTIDE SEQUENCE [LARGE SCALE MRNA]</scope>
</reference>
<feature type="chain" id="PRO_0000438515" description="Protein ALP1-like">
    <location>
        <begin position="1"/>
        <end position="406"/>
    </location>
</feature>
<feature type="domain" description="DDE Tnp4" evidence="3">
    <location>
        <begin position="187"/>
        <end position="353"/>
    </location>
</feature>
<feature type="short sequence motif" description="Nuclear localization signal" evidence="4">
    <location>
        <begin position="8"/>
        <end position="15"/>
    </location>
</feature>
<feature type="binding site" evidence="3">
    <location>
        <position position="188"/>
    </location>
    <ligand>
        <name>a divalent metal cation</name>
        <dbReference type="ChEBI" id="CHEBI:60240"/>
    </ligand>
</feature>
<feature type="binding site" evidence="3">
    <location>
        <position position="240"/>
    </location>
    <ligand>
        <name>a divalent metal cation</name>
        <dbReference type="ChEBI" id="CHEBI:60240"/>
    </ligand>
</feature>
<feature type="binding site" evidence="3">
    <location>
        <position position="279"/>
    </location>
    <ligand>
        <name>a divalent metal cation</name>
        <dbReference type="ChEBI" id="CHEBI:60240"/>
    </ligand>
</feature>
<organism>
    <name type="scientific">Arabidopsis thaliana</name>
    <name type="common">Mouse-ear cress</name>
    <dbReference type="NCBI Taxonomy" id="3702"/>
    <lineage>
        <taxon>Eukaryota</taxon>
        <taxon>Viridiplantae</taxon>
        <taxon>Streptophyta</taxon>
        <taxon>Embryophyta</taxon>
        <taxon>Tracheophyta</taxon>
        <taxon>Spermatophyta</taxon>
        <taxon>Magnoliopsida</taxon>
        <taxon>eudicotyledons</taxon>
        <taxon>Gunneridae</taxon>
        <taxon>Pentapetalae</taxon>
        <taxon>rosids</taxon>
        <taxon>malvids</taxon>
        <taxon>Brassicales</taxon>
        <taxon>Brassicaceae</taxon>
        <taxon>Camelineae</taxon>
        <taxon>Arabidopsis</taxon>
    </lineage>
</organism>
<gene>
    <name evidence="6" type="ordered locus">At3g55350</name>
    <name evidence="7" type="ORF">T22E16.10</name>
</gene>
<sequence>MGPIKTIKKKKRAEKKVDRNVLLAATAAATSASAAAALNNNDDDDDSSSQSLDWWDGFSRRIYGGSTDPKTFESVFKISRKTFDYICSLVKADFTAKPANFSDSNGNPLSLNDRVAVALRRLGSGESLSVIGETFGMNQSTVSQITWRFVESMEERAIHHLSWPSKLDEIKSKFEKISGLPNCCGAIDITHIVMNLPAVEPSNKVWLDGEKNFSMTLQAVVDPDMRFLDVIAGWPGSLNDDVVLKNSGFYKLVEKGKRLNGEKLPLSERTELREYIVGDSGFPLLPWLLTPYQGKPTSLPQTEFNKRHSEATKAAQMALSKLKDRWRIINGVMWMPDRNRLPRIIFVCCLLHNIIIDMEDQTLDDQPLSQQHDMNYRQRSCKLADEASSVLRDELSDQLCGKNSSA</sequence>
<name>ALPL_ARATH</name>
<accession>Q9M2U3</accession>
<proteinExistence type="evidence at transcript level"/>
<keyword id="KW-0378">Hydrolase</keyword>
<keyword id="KW-0479">Metal-binding</keyword>
<keyword id="KW-0540">Nuclease</keyword>
<keyword id="KW-0539">Nucleus</keyword>
<keyword id="KW-1185">Reference proteome</keyword>